<accession>B1IH48</accession>
<name>ACCD_CLOBK</name>
<feature type="chain" id="PRO_0000358969" description="Acetyl-coenzyme A carboxylase carboxyl transferase subunit beta">
    <location>
        <begin position="1"/>
        <end position="289"/>
    </location>
</feature>
<feature type="domain" description="CoA carboxyltransferase N-terminal" evidence="2">
    <location>
        <begin position="34"/>
        <end position="289"/>
    </location>
</feature>
<feature type="zinc finger region" description="C4-type" evidence="1">
    <location>
        <begin position="38"/>
        <end position="60"/>
    </location>
</feature>
<feature type="binding site" evidence="1">
    <location>
        <position position="38"/>
    </location>
    <ligand>
        <name>Zn(2+)</name>
        <dbReference type="ChEBI" id="CHEBI:29105"/>
    </ligand>
</feature>
<feature type="binding site" evidence="1">
    <location>
        <position position="41"/>
    </location>
    <ligand>
        <name>Zn(2+)</name>
        <dbReference type="ChEBI" id="CHEBI:29105"/>
    </ligand>
</feature>
<feature type="binding site" evidence="1">
    <location>
        <position position="57"/>
    </location>
    <ligand>
        <name>Zn(2+)</name>
        <dbReference type="ChEBI" id="CHEBI:29105"/>
    </ligand>
</feature>
<feature type="binding site" evidence="1">
    <location>
        <position position="60"/>
    </location>
    <ligand>
        <name>Zn(2+)</name>
        <dbReference type="ChEBI" id="CHEBI:29105"/>
    </ligand>
</feature>
<evidence type="ECO:0000255" key="1">
    <source>
        <dbReference type="HAMAP-Rule" id="MF_01395"/>
    </source>
</evidence>
<evidence type="ECO:0000255" key="2">
    <source>
        <dbReference type="PROSITE-ProRule" id="PRU01136"/>
    </source>
</evidence>
<comment type="function">
    <text evidence="1">Component of the acetyl coenzyme A carboxylase (ACC) complex. Biotin carboxylase (BC) catalyzes the carboxylation of biotin on its carrier protein (BCCP) and then the CO(2) group is transferred by the transcarboxylase to acetyl-CoA to form malonyl-CoA.</text>
</comment>
<comment type="catalytic activity">
    <reaction evidence="1">
        <text>N(6)-carboxybiotinyl-L-lysyl-[protein] + acetyl-CoA = N(6)-biotinyl-L-lysyl-[protein] + malonyl-CoA</text>
        <dbReference type="Rhea" id="RHEA:54728"/>
        <dbReference type="Rhea" id="RHEA-COMP:10505"/>
        <dbReference type="Rhea" id="RHEA-COMP:10506"/>
        <dbReference type="ChEBI" id="CHEBI:57288"/>
        <dbReference type="ChEBI" id="CHEBI:57384"/>
        <dbReference type="ChEBI" id="CHEBI:83144"/>
        <dbReference type="ChEBI" id="CHEBI:83145"/>
        <dbReference type="EC" id="2.1.3.15"/>
    </reaction>
</comment>
<comment type="cofactor">
    <cofactor evidence="1">
        <name>Zn(2+)</name>
        <dbReference type="ChEBI" id="CHEBI:29105"/>
    </cofactor>
    <text evidence="1">Binds 1 zinc ion per subunit.</text>
</comment>
<comment type="pathway">
    <text evidence="1">Lipid metabolism; malonyl-CoA biosynthesis; malonyl-CoA from acetyl-CoA: step 1/1.</text>
</comment>
<comment type="subunit">
    <text evidence="1">Acetyl-CoA carboxylase is a heterohexamer composed of biotin carboxyl carrier protein (AccB), biotin carboxylase (AccC) and two subunits each of ACCase subunit alpha (AccA) and ACCase subunit beta (AccD).</text>
</comment>
<comment type="subcellular location">
    <subcellularLocation>
        <location evidence="1">Cytoplasm</location>
    </subcellularLocation>
</comment>
<comment type="similarity">
    <text evidence="1">Belongs to the AccD/PCCB family.</text>
</comment>
<organism>
    <name type="scientific">Clostridium botulinum (strain Okra / Type B1)</name>
    <dbReference type="NCBI Taxonomy" id="498213"/>
    <lineage>
        <taxon>Bacteria</taxon>
        <taxon>Bacillati</taxon>
        <taxon>Bacillota</taxon>
        <taxon>Clostridia</taxon>
        <taxon>Eubacteriales</taxon>
        <taxon>Clostridiaceae</taxon>
        <taxon>Clostridium</taxon>
    </lineage>
</organism>
<protein>
    <recommendedName>
        <fullName evidence="1">Acetyl-coenzyme A carboxylase carboxyl transferase subunit beta</fullName>
        <shortName evidence="1">ACCase subunit beta</shortName>
        <shortName evidence="1">Acetyl-CoA carboxylase carboxyltransferase subunit beta</shortName>
        <ecNumber evidence="1">2.1.3.15</ecNumber>
    </recommendedName>
</protein>
<reference key="1">
    <citation type="journal article" date="2007" name="PLoS ONE">
        <title>Analysis of the neurotoxin complex genes in Clostridium botulinum A1-A4 and B1 strains: BoNT/A3, /Ba4 and /B1 clusters are located within plasmids.</title>
        <authorList>
            <person name="Smith T.J."/>
            <person name="Hill K.K."/>
            <person name="Foley B.T."/>
            <person name="Detter J.C."/>
            <person name="Munk A.C."/>
            <person name="Bruce D.C."/>
            <person name="Doggett N.A."/>
            <person name="Smith L.A."/>
            <person name="Marks J.D."/>
            <person name="Xie G."/>
            <person name="Brettin T.S."/>
        </authorList>
    </citation>
    <scope>NUCLEOTIDE SEQUENCE [LARGE SCALE GENOMIC DNA]</scope>
    <source>
        <strain>Okra / Type B1</strain>
    </source>
</reference>
<proteinExistence type="inferred from homology"/>
<gene>
    <name evidence="1" type="primary">accD</name>
    <name type="ordered locus">CLD_0891</name>
</gene>
<sequence>MLKNLFRKTKYITVSQKNIENYKRENTPTIPDGMWVKCNKCGEILYQNDLEKNYMVCNLCGNHFRIGVKERIKYLFDKDTFKEWDYKIKTENPLDFKGYDEKIEHIKEKTNLSEAVTTGKGKIAGMEAVVCIMDSKFMMGSMGCVVGEKITRAIERAIKLRLPVIIFTASGGARMQEGILSLMQMAKVSSALAKLDEEGLLYICVLTDPTTGGVTASFAMLGDIILAEPDALIGFAGKRVIEQTINEKLPEDFQKSEFLLEHGFIDKIVPRSDLRKVLAKLINMHQNSF</sequence>
<dbReference type="EC" id="2.1.3.15" evidence="1"/>
<dbReference type="EMBL" id="CP000939">
    <property type="protein sequence ID" value="ACA46160.1"/>
    <property type="molecule type" value="Genomic_DNA"/>
</dbReference>
<dbReference type="RefSeq" id="WP_003401023.1">
    <property type="nucleotide sequence ID" value="NC_010516.1"/>
</dbReference>
<dbReference type="SMR" id="B1IH48"/>
<dbReference type="KEGG" id="cbb:CLD_0891"/>
<dbReference type="HOGENOM" id="CLU_015486_1_1_9"/>
<dbReference type="UniPathway" id="UPA00655">
    <property type="reaction ID" value="UER00711"/>
</dbReference>
<dbReference type="Proteomes" id="UP000008541">
    <property type="component" value="Chromosome"/>
</dbReference>
<dbReference type="GO" id="GO:0009317">
    <property type="term" value="C:acetyl-CoA carboxylase complex"/>
    <property type="evidence" value="ECO:0007669"/>
    <property type="project" value="InterPro"/>
</dbReference>
<dbReference type="GO" id="GO:0003989">
    <property type="term" value="F:acetyl-CoA carboxylase activity"/>
    <property type="evidence" value="ECO:0007669"/>
    <property type="project" value="InterPro"/>
</dbReference>
<dbReference type="GO" id="GO:0005524">
    <property type="term" value="F:ATP binding"/>
    <property type="evidence" value="ECO:0007669"/>
    <property type="project" value="UniProtKB-KW"/>
</dbReference>
<dbReference type="GO" id="GO:0016743">
    <property type="term" value="F:carboxyl- or carbamoyltransferase activity"/>
    <property type="evidence" value="ECO:0007669"/>
    <property type="project" value="UniProtKB-UniRule"/>
</dbReference>
<dbReference type="GO" id="GO:0008270">
    <property type="term" value="F:zinc ion binding"/>
    <property type="evidence" value="ECO:0007669"/>
    <property type="project" value="UniProtKB-UniRule"/>
</dbReference>
<dbReference type="GO" id="GO:0006633">
    <property type="term" value="P:fatty acid biosynthetic process"/>
    <property type="evidence" value="ECO:0007669"/>
    <property type="project" value="UniProtKB-KW"/>
</dbReference>
<dbReference type="GO" id="GO:2001295">
    <property type="term" value="P:malonyl-CoA biosynthetic process"/>
    <property type="evidence" value="ECO:0007669"/>
    <property type="project" value="UniProtKB-UniRule"/>
</dbReference>
<dbReference type="Gene3D" id="3.90.226.10">
    <property type="entry name" value="2-enoyl-CoA Hydratase, Chain A, domain 1"/>
    <property type="match status" value="1"/>
</dbReference>
<dbReference type="HAMAP" id="MF_01395">
    <property type="entry name" value="AcetylCoA_CT_beta"/>
    <property type="match status" value="1"/>
</dbReference>
<dbReference type="InterPro" id="IPR034733">
    <property type="entry name" value="AcCoA_carboxyl_beta"/>
</dbReference>
<dbReference type="InterPro" id="IPR000438">
    <property type="entry name" value="Acetyl_CoA_COase_Trfase_b_su"/>
</dbReference>
<dbReference type="InterPro" id="IPR029045">
    <property type="entry name" value="ClpP/crotonase-like_dom_sf"/>
</dbReference>
<dbReference type="InterPro" id="IPR011762">
    <property type="entry name" value="COA_CT_N"/>
</dbReference>
<dbReference type="InterPro" id="IPR041010">
    <property type="entry name" value="Znf-ACC"/>
</dbReference>
<dbReference type="NCBIfam" id="TIGR00515">
    <property type="entry name" value="accD"/>
    <property type="match status" value="1"/>
</dbReference>
<dbReference type="PANTHER" id="PTHR42995">
    <property type="entry name" value="ACETYL-COENZYME A CARBOXYLASE CARBOXYL TRANSFERASE SUBUNIT BETA, CHLOROPLASTIC"/>
    <property type="match status" value="1"/>
</dbReference>
<dbReference type="PANTHER" id="PTHR42995:SF5">
    <property type="entry name" value="ACETYL-COENZYME A CARBOXYLASE CARBOXYL TRANSFERASE SUBUNIT BETA, CHLOROPLASTIC"/>
    <property type="match status" value="1"/>
</dbReference>
<dbReference type="Pfam" id="PF01039">
    <property type="entry name" value="Carboxyl_trans"/>
    <property type="match status" value="1"/>
</dbReference>
<dbReference type="Pfam" id="PF17848">
    <property type="entry name" value="Zn_ribbon_ACC"/>
    <property type="match status" value="1"/>
</dbReference>
<dbReference type="PRINTS" id="PR01070">
    <property type="entry name" value="ACCCTRFRASEB"/>
</dbReference>
<dbReference type="SUPFAM" id="SSF52096">
    <property type="entry name" value="ClpP/crotonase"/>
    <property type="match status" value="1"/>
</dbReference>
<dbReference type="PROSITE" id="PS50980">
    <property type="entry name" value="COA_CT_NTER"/>
    <property type="match status" value="1"/>
</dbReference>
<keyword id="KW-0067">ATP-binding</keyword>
<keyword id="KW-0963">Cytoplasm</keyword>
<keyword id="KW-0275">Fatty acid biosynthesis</keyword>
<keyword id="KW-0276">Fatty acid metabolism</keyword>
<keyword id="KW-0444">Lipid biosynthesis</keyword>
<keyword id="KW-0443">Lipid metabolism</keyword>
<keyword id="KW-0479">Metal-binding</keyword>
<keyword id="KW-0547">Nucleotide-binding</keyword>
<keyword id="KW-0808">Transferase</keyword>
<keyword id="KW-0862">Zinc</keyword>
<keyword id="KW-0863">Zinc-finger</keyword>